<comment type="function">
    <text>Tubulin is the major constituent of microtubules, a cylinder consisting of laterally associated linear protofilaments composed of alpha- and beta-tubulin heterodimers. Microtubules grow by the addition of GTP-tubulin dimers to the microtubule end, where a stabilizing cap forms. Below the cap, tubulin dimers are in GDP-bound state, owing to GTPase activity of alpha-tubulin.</text>
</comment>
<comment type="catalytic activity">
    <reaction evidence="2">
        <text>GTP + H2O = GDP + phosphate + H(+)</text>
        <dbReference type="Rhea" id="RHEA:19669"/>
        <dbReference type="ChEBI" id="CHEBI:15377"/>
        <dbReference type="ChEBI" id="CHEBI:15378"/>
        <dbReference type="ChEBI" id="CHEBI:37565"/>
        <dbReference type="ChEBI" id="CHEBI:43474"/>
        <dbReference type="ChEBI" id="CHEBI:58189"/>
    </reaction>
    <physiologicalReaction direction="left-to-right" evidence="2">
        <dbReference type="Rhea" id="RHEA:19670"/>
    </physiologicalReaction>
</comment>
<comment type="cofactor">
    <cofactor evidence="2">
        <name>Mg(2+)</name>
        <dbReference type="ChEBI" id="CHEBI:18420"/>
    </cofactor>
</comment>
<comment type="subunit">
    <text>Dimer of alpha and beta chains. A typical microtubule is a hollow water-filled tube with an outer diameter of 25 nm and an inner diameter of 15 nM. Alpha-beta heterodimers associate head-to-tail to form protofilaments running lengthwise along the microtubule wall with the beta-tubulin subunit facing the microtubule plus end conferring a structural polarity. Microtubules usually have 13 protofilaments but different protofilament numbers can be found in some organisms and specialized cells.</text>
</comment>
<comment type="subcellular location">
    <subcellularLocation>
        <location>Cytoplasm</location>
        <location>Cytoskeleton</location>
    </subcellularLocation>
</comment>
<comment type="PTM">
    <text evidence="1">Undergoes a tyrosination/detyrosination cycle, the cyclic removal and re-addition of a C-terminal tyrosine residue by the enzymes tubulin tyrosine carboxypeptidase (TTCP) and tubulin tyrosine ligase (TTL), respectively.</text>
</comment>
<comment type="PTM">
    <text evidence="1">Acetylation of alpha chains at Lys-40 stabilizes microtubules and affects affinity and processivity of microtubule motors. This modification has a role in multiple cellular functions, ranging from cell motility, cell cycle progression or cell differentiation to intracellular trafficking and signaling (By similarity).</text>
</comment>
<comment type="similarity">
    <text evidence="3">Belongs to the tubulin family.</text>
</comment>
<reference key="1">
    <citation type="journal article" date="1989" name="Mol. Microbiol.">
        <title>Isolation of alpha-tubulin genes from the human malaria parasite, Plasmodium falciparum: sequence analysis of alpha-tubulin.</title>
        <authorList>
            <person name="Holloway S.P."/>
            <person name="Sims P.F.G."/>
            <person name="Delves C.J."/>
            <person name="Scaife J.G."/>
            <person name="Hyde J.E."/>
        </authorList>
    </citation>
    <scope>NUCLEOTIDE SEQUENCE [GENOMIC DNA]</scope>
</reference>
<sequence length="453" mass="50297">MREVISIHVGQAGIQVGNACWELFCLEHGIQPDGQMPSDKASRANDDAFNTFFSETGAGKHVPRCVFVDLEPTVVDEVRTGTYRQLFHPEQLISGKEDAANNFARGHYTIGKEVIDVCLDRIRKLADNCTGLQGFLMFSAVGGGTGSGFGCLMLERLSVDYGKKSKLNFCCWPSPQVSTAVVEPYNSVLSTHSLLEHTDVAIMLDNEAIYDICRRNLDIERPTYTNLNRLIAQVISSLTASLRFDGALNVDVTEFQTNLVPYPRIHFMLSSYAPVVSAEKAYHEQLSVSEITNSAFEPANMMAKCDPRHGKYMACCLMYRGDVVPKDVNAAVATIKTKRTIQFVDWCPTGFKCGINYQPPTVVPGGDLAKVMRAVCMISNSTAIAEVFSRMDQKFDLMYAKRAFVHWYVGEGMEEGEFSEAREDLAALEKDYEEVGIESNEAEGEDEGYEADY</sequence>
<accession>P14642</accession>
<keyword id="KW-0007">Acetylation</keyword>
<keyword id="KW-0963">Cytoplasm</keyword>
<keyword id="KW-0206">Cytoskeleton</keyword>
<keyword id="KW-0342">GTP-binding</keyword>
<keyword id="KW-0378">Hydrolase</keyword>
<keyword id="KW-0460">Magnesium</keyword>
<keyword id="KW-0479">Metal-binding</keyword>
<keyword id="KW-0493">Microtubule</keyword>
<keyword id="KW-0547">Nucleotide-binding</keyword>
<organism>
    <name type="scientific">Plasmodium falciparum (isolate K1 / Thailand)</name>
    <dbReference type="NCBI Taxonomy" id="5839"/>
    <lineage>
        <taxon>Eukaryota</taxon>
        <taxon>Sar</taxon>
        <taxon>Alveolata</taxon>
        <taxon>Apicomplexa</taxon>
        <taxon>Aconoidasida</taxon>
        <taxon>Haemosporida</taxon>
        <taxon>Plasmodiidae</taxon>
        <taxon>Plasmodium</taxon>
        <taxon>Plasmodium (Laverania)</taxon>
    </lineage>
</organism>
<dbReference type="EC" id="3.6.5.-" evidence="2"/>
<dbReference type="EMBL" id="X15979">
    <property type="protein sequence ID" value="CAA34101.1"/>
    <property type="molecule type" value="Genomic_DNA"/>
</dbReference>
<dbReference type="PIR" id="S07459">
    <property type="entry name" value="S07459"/>
</dbReference>
<dbReference type="SMR" id="P14642"/>
<dbReference type="DrugBank" id="DB11638">
    <property type="generic name" value="Artenimol"/>
</dbReference>
<dbReference type="GO" id="GO:0005737">
    <property type="term" value="C:cytoplasm"/>
    <property type="evidence" value="ECO:0007669"/>
    <property type="project" value="UniProtKB-KW"/>
</dbReference>
<dbReference type="GO" id="GO:0005874">
    <property type="term" value="C:microtubule"/>
    <property type="evidence" value="ECO:0007669"/>
    <property type="project" value="UniProtKB-KW"/>
</dbReference>
<dbReference type="GO" id="GO:0005525">
    <property type="term" value="F:GTP binding"/>
    <property type="evidence" value="ECO:0007669"/>
    <property type="project" value="UniProtKB-KW"/>
</dbReference>
<dbReference type="GO" id="GO:0016787">
    <property type="term" value="F:hydrolase activity"/>
    <property type="evidence" value="ECO:0007669"/>
    <property type="project" value="UniProtKB-KW"/>
</dbReference>
<dbReference type="GO" id="GO:0046872">
    <property type="term" value="F:metal ion binding"/>
    <property type="evidence" value="ECO:0007669"/>
    <property type="project" value="UniProtKB-KW"/>
</dbReference>
<dbReference type="GO" id="GO:0005200">
    <property type="term" value="F:structural constituent of cytoskeleton"/>
    <property type="evidence" value="ECO:0007669"/>
    <property type="project" value="InterPro"/>
</dbReference>
<dbReference type="GO" id="GO:0007017">
    <property type="term" value="P:microtubule-based process"/>
    <property type="evidence" value="ECO:0007669"/>
    <property type="project" value="InterPro"/>
</dbReference>
<dbReference type="CDD" id="cd02186">
    <property type="entry name" value="alpha_tubulin"/>
    <property type="match status" value="1"/>
</dbReference>
<dbReference type="FunFam" id="1.10.287.600:FF:000005">
    <property type="entry name" value="Tubulin alpha chain"/>
    <property type="match status" value="1"/>
</dbReference>
<dbReference type="FunFam" id="3.30.1330.20:FF:000001">
    <property type="entry name" value="Tubulin alpha chain"/>
    <property type="match status" value="1"/>
</dbReference>
<dbReference type="FunFam" id="3.40.50.1440:FF:000004">
    <property type="entry name" value="Tubulin alpha chain"/>
    <property type="match status" value="1"/>
</dbReference>
<dbReference type="Gene3D" id="1.10.287.600">
    <property type="entry name" value="Helix hairpin bin"/>
    <property type="match status" value="1"/>
</dbReference>
<dbReference type="Gene3D" id="3.30.1330.20">
    <property type="entry name" value="Tubulin/FtsZ, C-terminal domain"/>
    <property type="match status" value="1"/>
</dbReference>
<dbReference type="Gene3D" id="3.40.50.1440">
    <property type="entry name" value="Tubulin/FtsZ, GTPase domain"/>
    <property type="match status" value="1"/>
</dbReference>
<dbReference type="InterPro" id="IPR002452">
    <property type="entry name" value="Alpha_tubulin"/>
</dbReference>
<dbReference type="InterPro" id="IPR008280">
    <property type="entry name" value="Tub_FtsZ_C"/>
</dbReference>
<dbReference type="InterPro" id="IPR000217">
    <property type="entry name" value="Tubulin"/>
</dbReference>
<dbReference type="InterPro" id="IPR037103">
    <property type="entry name" value="Tubulin/FtsZ-like_C"/>
</dbReference>
<dbReference type="InterPro" id="IPR018316">
    <property type="entry name" value="Tubulin/FtsZ_2-layer-sand-dom"/>
</dbReference>
<dbReference type="InterPro" id="IPR036525">
    <property type="entry name" value="Tubulin/FtsZ_GTPase_sf"/>
</dbReference>
<dbReference type="InterPro" id="IPR023123">
    <property type="entry name" value="Tubulin_C"/>
</dbReference>
<dbReference type="InterPro" id="IPR017975">
    <property type="entry name" value="Tubulin_CS"/>
</dbReference>
<dbReference type="InterPro" id="IPR003008">
    <property type="entry name" value="Tubulin_FtsZ_GTPase"/>
</dbReference>
<dbReference type="PANTHER" id="PTHR11588">
    <property type="entry name" value="TUBULIN"/>
    <property type="match status" value="1"/>
</dbReference>
<dbReference type="Pfam" id="PF00091">
    <property type="entry name" value="Tubulin"/>
    <property type="match status" value="1"/>
</dbReference>
<dbReference type="Pfam" id="PF03953">
    <property type="entry name" value="Tubulin_C"/>
    <property type="match status" value="1"/>
</dbReference>
<dbReference type="PRINTS" id="PR01162">
    <property type="entry name" value="ALPHATUBULIN"/>
</dbReference>
<dbReference type="PRINTS" id="PR01161">
    <property type="entry name" value="TUBULIN"/>
</dbReference>
<dbReference type="SMART" id="SM00864">
    <property type="entry name" value="Tubulin"/>
    <property type="match status" value="1"/>
</dbReference>
<dbReference type="SMART" id="SM00865">
    <property type="entry name" value="Tubulin_C"/>
    <property type="match status" value="1"/>
</dbReference>
<dbReference type="SUPFAM" id="SSF55307">
    <property type="entry name" value="Tubulin C-terminal domain-like"/>
    <property type="match status" value="1"/>
</dbReference>
<dbReference type="SUPFAM" id="SSF52490">
    <property type="entry name" value="Tubulin nucleotide-binding domain-like"/>
    <property type="match status" value="1"/>
</dbReference>
<dbReference type="PROSITE" id="PS00227">
    <property type="entry name" value="TUBULIN"/>
    <property type="match status" value="1"/>
</dbReference>
<feature type="chain" id="PRO_0000048217" description="Tubulin alpha chain">
    <location>
        <begin position="1"/>
        <end position="453"/>
    </location>
</feature>
<feature type="active site" evidence="2">
    <location>
        <position position="254"/>
    </location>
</feature>
<feature type="binding site" evidence="2">
    <location>
        <position position="11"/>
    </location>
    <ligand>
        <name>GTP</name>
        <dbReference type="ChEBI" id="CHEBI:37565"/>
    </ligand>
</feature>
<feature type="binding site" evidence="2">
    <location>
        <position position="71"/>
    </location>
    <ligand>
        <name>GTP</name>
        <dbReference type="ChEBI" id="CHEBI:37565"/>
    </ligand>
</feature>
<feature type="binding site" evidence="2">
    <location>
        <position position="71"/>
    </location>
    <ligand>
        <name>Mg(2+)</name>
        <dbReference type="ChEBI" id="CHEBI:18420"/>
    </ligand>
</feature>
<feature type="binding site" evidence="2">
    <location>
        <position position="144"/>
    </location>
    <ligand>
        <name>GTP</name>
        <dbReference type="ChEBI" id="CHEBI:37565"/>
    </ligand>
</feature>
<feature type="binding site" evidence="2">
    <location>
        <position position="145"/>
    </location>
    <ligand>
        <name>GTP</name>
        <dbReference type="ChEBI" id="CHEBI:37565"/>
    </ligand>
</feature>
<feature type="binding site" evidence="2">
    <location>
        <position position="179"/>
    </location>
    <ligand>
        <name>GTP</name>
        <dbReference type="ChEBI" id="CHEBI:37565"/>
    </ligand>
</feature>
<feature type="binding site" evidence="2">
    <location>
        <position position="206"/>
    </location>
    <ligand>
        <name>GTP</name>
        <dbReference type="ChEBI" id="CHEBI:37565"/>
    </ligand>
</feature>
<feature type="binding site" evidence="2">
    <location>
        <position position="228"/>
    </location>
    <ligand>
        <name>GTP</name>
        <dbReference type="ChEBI" id="CHEBI:37565"/>
    </ligand>
</feature>
<feature type="site" description="Involved in polymerization">
    <location>
        <position position="453"/>
    </location>
</feature>
<feature type="modified residue" description="N6-acetyllysine" evidence="1">
    <location>
        <position position="40"/>
    </location>
</feature>
<protein>
    <recommendedName>
        <fullName>Tubulin alpha chain</fullName>
        <ecNumber evidence="2">3.6.5.-</ecNumber>
    </recommendedName>
</protein>
<proteinExistence type="inferred from homology"/>
<evidence type="ECO:0000250" key="1"/>
<evidence type="ECO:0000250" key="2">
    <source>
        <dbReference type="UniProtKB" id="P68363"/>
    </source>
</evidence>
<evidence type="ECO:0000305" key="3"/>
<name>TBA_PLAFK</name>